<keyword id="KW-0963">Cytoplasm</keyword>
<keyword id="KW-0489">Methyltransferase</keyword>
<keyword id="KW-0949">S-adenosyl-L-methionine</keyword>
<keyword id="KW-0808">Transferase</keyword>
<protein>
    <recommendedName>
        <fullName evidence="1">Ribosomal protein L11 methyltransferase</fullName>
        <shortName evidence="1">L11 Mtase</shortName>
        <ecNumber evidence="1">2.1.1.-</ecNumber>
    </recommendedName>
</protein>
<feature type="chain" id="PRO_1000083354" description="Ribosomal protein L11 methyltransferase">
    <location>
        <begin position="1"/>
        <end position="296"/>
    </location>
</feature>
<feature type="binding site" evidence="1">
    <location>
        <position position="147"/>
    </location>
    <ligand>
        <name>S-adenosyl-L-methionine</name>
        <dbReference type="ChEBI" id="CHEBI:59789"/>
    </ligand>
</feature>
<feature type="binding site" evidence="1">
    <location>
        <position position="168"/>
    </location>
    <ligand>
        <name>S-adenosyl-L-methionine</name>
        <dbReference type="ChEBI" id="CHEBI:59789"/>
    </ligand>
</feature>
<feature type="binding site" evidence="1">
    <location>
        <position position="190"/>
    </location>
    <ligand>
        <name>S-adenosyl-L-methionine</name>
        <dbReference type="ChEBI" id="CHEBI:59789"/>
    </ligand>
</feature>
<feature type="binding site" evidence="1">
    <location>
        <position position="232"/>
    </location>
    <ligand>
        <name>S-adenosyl-L-methionine</name>
        <dbReference type="ChEBI" id="CHEBI:59789"/>
    </ligand>
</feature>
<evidence type="ECO:0000255" key="1">
    <source>
        <dbReference type="HAMAP-Rule" id="MF_00735"/>
    </source>
</evidence>
<reference key="1">
    <citation type="submission" date="2007-06" db="EMBL/GenBank/DDBJ databases">
        <title>Complete sequence of Marinomonas sp. MWYL1.</title>
        <authorList>
            <consortium name="US DOE Joint Genome Institute"/>
            <person name="Copeland A."/>
            <person name="Lucas S."/>
            <person name="Lapidus A."/>
            <person name="Barry K."/>
            <person name="Glavina del Rio T."/>
            <person name="Dalin E."/>
            <person name="Tice H."/>
            <person name="Pitluck S."/>
            <person name="Kiss H."/>
            <person name="Brettin T."/>
            <person name="Bruce D."/>
            <person name="Detter J.C."/>
            <person name="Han C."/>
            <person name="Schmutz J."/>
            <person name="Larimer F."/>
            <person name="Land M."/>
            <person name="Hauser L."/>
            <person name="Kyrpides N."/>
            <person name="Kim E."/>
            <person name="Johnston A.W.B."/>
            <person name="Todd J.D."/>
            <person name="Rogers R."/>
            <person name="Wexler M."/>
            <person name="Bond P.L."/>
            <person name="Li Y."/>
            <person name="Richardson P."/>
        </authorList>
    </citation>
    <scope>NUCLEOTIDE SEQUENCE [LARGE SCALE GENOMIC DNA]</scope>
    <source>
        <strain>MWYL1</strain>
    </source>
</reference>
<proteinExistence type="inferred from homology"/>
<dbReference type="EC" id="2.1.1.-" evidence="1"/>
<dbReference type="EMBL" id="CP000749">
    <property type="protein sequence ID" value="ABR71894.1"/>
    <property type="molecule type" value="Genomic_DNA"/>
</dbReference>
<dbReference type="SMR" id="A6VZL5"/>
<dbReference type="STRING" id="400668.Mmwyl1_2983"/>
<dbReference type="KEGG" id="mmw:Mmwyl1_2983"/>
<dbReference type="eggNOG" id="COG2264">
    <property type="taxonomic scope" value="Bacteria"/>
</dbReference>
<dbReference type="HOGENOM" id="CLU_049382_4_1_6"/>
<dbReference type="OrthoDB" id="9785995at2"/>
<dbReference type="GO" id="GO:0005829">
    <property type="term" value="C:cytosol"/>
    <property type="evidence" value="ECO:0007669"/>
    <property type="project" value="TreeGrafter"/>
</dbReference>
<dbReference type="GO" id="GO:0016279">
    <property type="term" value="F:protein-lysine N-methyltransferase activity"/>
    <property type="evidence" value="ECO:0007669"/>
    <property type="project" value="TreeGrafter"/>
</dbReference>
<dbReference type="GO" id="GO:0032259">
    <property type="term" value="P:methylation"/>
    <property type="evidence" value="ECO:0007669"/>
    <property type="project" value="UniProtKB-KW"/>
</dbReference>
<dbReference type="CDD" id="cd02440">
    <property type="entry name" value="AdoMet_MTases"/>
    <property type="match status" value="1"/>
</dbReference>
<dbReference type="Gene3D" id="3.40.50.150">
    <property type="entry name" value="Vaccinia Virus protein VP39"/>
    <property type="match status" value="1"/>
</dbReference>
<dbReference type="HAMAP" id="MF_00735">
    <property type="entry name" value="Methyltr_PrmA"/>
    <property type="match status" value="1"/>
</dbReference>
<dbReference type="InterPro" id="IPR050078">
    <property type="entry name" value="Ribosomal_L11_MeTrfase_PrmA"/>
</dbReference>
<dbReference type="InterPro" id="IPR004498">
    <property type="entry name" value="Ribosomal_PrmA_MeTrfase"/>
</dbReference>
<dbReference type="InterPro" id="IPR029063">
    <property type="entry name" value="SAM-dependent_MTases_sf"/>
</dbReference>
<dbReference type="NCBIfam" id="TIGR00406">
    <property type="entry name" value="prmA"/>
    <property type="match status" value="1"/>
</dbReference>
<dbReference type="PANTHER" id="PTHR43648">
    <property type="entry name" value="ELECTRON TRANSFER FLAVOPROTEIN BETA SUBUNIT LYSINE METHYLTRANSFERASE"/>
    <property type="match status" value="1"/>
</dbReference>
<dbReference type="PANTHER" id="PTHR43648:SF1">
    <property type="entry name" value="ELECTRON TRANSFER FLAVOPROTEIN BETA SUBUNIT LYSINE METHYLTRANSFERASE"/>
    <property type="match status" value="1"/>
</dbReference>
<dbReference type="Pfam" id="PF06325">
    <property type="entry name" value="PrmA"/>
    <property type="match status" value="1"/>
</dbReference>
<dbReference type="PIRSF" id="PIRSF000401">
    <property type="entry name" value="RPL11_MTase"/>
    <property type="match status" value="1"/>
</dbReference>
<dbReference type="SUPFAM" id="SSF53335">
    <property type="entry name" value="S-adenosyl-L-methionine-dependent methyltransferases"/>
    <property type="match status" value="1"/>
</dbReference>
<organism>
    <name type="scientific">Marinomonas sp. (strain MWYL1)</name>
    <dbReference type="NCBI Taxonomy" id="400668"/>
    <lineage>
        <taxon>Bacteria</taxon>
        <taxon>Pseudomonadati</taxon>
        <taxon>Pseudomonadota</taxon>
        <taxon>Gammaproteobacteria</taxon>
        <taxon>Oceanospirillales</taxon>
        <taxon>Oceanospirillaceae</taxon>
        <taxon>Marinomonas</taxon>
    </lineage>
</organism>
<accession>A6VZL5</accession>
<sequence length="296" mass="32885">MPWLQIRINTTPDHVPAFEDTLLDCGAMVVTFEDVHDDPVYEPDLNTTPLWKNTKVTGLFEADADIEHIRPVIEHKAESLGETDIDMKIEIVEDKDWEREWMDNYHPIQFGERLWVCPSWREVPDPNAVTLMLDPGLAFGTGTHPTTALCLQWLDSIDCKDKTIIDYGCGSGILGIAGLLLGANNMVGIDIDPQAVQATEANAERNKIDPSRLEVKLPPYESDLQADIVVANILAGPLAHLAPTISALVKNQGQLALSGILANQAQEVIEAYQEWFTIDSITEKEEWVRIVGTKHA</sequence>
<name>PRMA_MARMS</name>
<gene>
    <name evidence="1" type="primary">prmA</name>
    <name type="ordered locus">Mmwyl1_2983</name>
</gene>
<comment type="function">
    <text evidence="1">Methylates ribosomal protein L11.</text>
</comment>
<comment type="catalytic activity">
    <reaction evidence="1">
        <text>L-lysyl-[protein] + 3 S-adenosyl-L-methionine = N(6),N(6),N(6)-trimethyl-L-lysyl-[protein] + 3 S-adenosyl-L-homocysteine + 3 H(+)</text>
        <dbReference type="Rhea" id="RHEA:54192"/>
        <dbReference type="Rhea" id="RHEA-COMP:9752"/>
        <dbReference type="Rhea" id="RHEA-COMP:13826"/>
        <dbReference type="ChEBI" id="CHEBI:15378"/>
        <dbReference type="ChEBI" id="CHEBI:29969"/>
        <dbReference type="ChEBI" id="CHEBI:57856"/>
        <dbReference type="ChEBI" id="CHEBI:59789"/>
        <dbReference type="ChEBI" id="CHEBI:61961"/>
    </reaction>
</comment>
<comment type="subcellular location">
    <subcellularLocation>
        <location evidence="1">Cytoplasm</location>
    </subcellularLocation>
</comment>
<comment type="similarity">
    <text evidence="1">Belongs to the methyltransferase superfamily. PrmA family.</text>
</comment>